<evidence type="ECO:0000255" key="1">
    <source>
        <dbReference type="HAMAP-Rule" id="MF_00093"/>
    </source>
</evidence>
<keyword id="KW-0963">Cytoplasm</keyword>
<keyword id="KW-0488">Methylation</keyword>
<keyword id="KW-0648">Protein biosynthesis</keyword>
<keyword id="KW-1185">Reference proteome</keyword>
<accession>A8MJX9</accession>
<gene>
    <name evidence="1" type="primary">prfA</name>
    <name type="ordered locus">Clos_2580</name>
</gene>
<comment type="function">
    <text evidence="1">Peptide chain release factor 1 directs the termination of translation in response to the peptide chain termination codons UAG and UAA.</text>
</comment>
<comment type="subcellular location">
    <subcellularLocation>
        <location evidence="1">Cytoplasm</location>
    </subcellularLocation>
</comment>
<comment type="PTM">
    <text evidence="1">Methylated by PrmC. Methylation increases the termination efficiency of RF1.</text>
</comment>
<comment type="similarity">
    <text evidence="1">Belongs to the prokaryotic/mitochondrial release factor family.</text>
</comment>
<protein>
    <recommendedName>
        <fullName evidence="1">Peptide chain release factor 1</fullName>
        <shortName evidence="1">RF-1</shortName>
    </recommendedName>
</protein>
<name>RF1_ALKOO</name>
<sequence>MLDKLAFLEEKYEDLSEKISEPEIINDQPQWKKLVKEHSDLEEIVMKYREYKKTEQGLNDAKEILRDKTADEEFREMAKMEIAELEEKIEVLEGELKILLLPKDPNDDKDVIVEIRAGAGGDEAGLFAADLFRMYTRYAENVGWKVEMMSANDTGIGGYKEVIFMIKGHGAYSRLKYESGVHRVQRIPSTESGGRIHTSTITVAVLPEADDVDFELDMNDIRVDVFRSSGNGGQSVNTTDSAVRVTHIPTGTVVSCQDEKSQLKNKEKALKILRARLLDVLIQEQQAEIAQDRKSQVGTGDRSERIRTYNFPQGRITDHRINVTLYRLDSFLNGDIQEMIDALITTDQAEKLKEVNS</sequence>
<dbReference type="EMBL" id="CP000853">
    <property type="protein sequence ID" value="ABW20111.1"/>
    <property type="molecule type" value="Genomic_DNA"/>
</dbReference>
<dbReference type="RefSeq" id="WP_012160418.1">
    <property type="nucleotide sequence ID" value="NC_009922.1"/>
</dbReference>
<dbReference type="SMR" id="A8MJX9"/>
<dbReference type="STRING" id="350688.Clos_2580"/>
<dbReference type="KEGG" id="aoe:Clos_2580"/>
<dbReference type="eggNOG" id="COG0216">
    <property type="taxonomic scope" value="Bacteria"/>
</dbReference>
<dbReference type="HOGENOM" id="CLU_036856_0_1_9"/>
<dbReference type="OrthoDB" id="9806673at2"/>
<dbReference type="Proteomes" id="UP000000269">
    <property type="component" value="Chromosome"/>
</dbReference>
<dbReference type="GO" id="GO:0005737">
    <property type="term" value="C:cytoplasm"/>
    <property type="evidence" value="ECO:0007669"/>
    <property type="project" value="UniProtKB-SubCell"/>
</dbReference>
<dbReference type="GO" id="GO:0016149">
    <property type="term" value="F:translation release factor activity, codon specific"/>
    <property type="evidence" value="ECO:0007669"/>
    <property type="project" value="UniProtKB-UniRule"/>
</dbReference>
<dbReference type="FunFam" id="3.30.160.20:FF:000004">
    <property type="entry name" value="Peptide chain release factor 1"/>
    <property type="match status" value="1"/>
</dbReference>
<dbReference type="FunFam" id="3.30.70.1660:FF:000002">
    <property type="entry name" value="Peptide chain release factor 1"/>
    <property type="match status" value="1"/>
</dbReference>
<dbReference type="FunFam" id="3.30.70.1660:FF:000004">
    <property type="entry name" value="Peptide chain release factor 1"/>
    <property type="match status" value="1"/>
</dbReference>
<dbReference type="Gene3D" id="3.30.160.20">
    <property type="match status" value="1"/>
</dbReference>
<dbReference type="Gene3D" id="3.30.70.1660">
    <property type="match status" value="2"/>
</dbReference>
<dbReference type="Gene3D" id="6.10.140.1950">
    <property type="match status" value="1"/>
</dbReference>
<dbReference type="HAMAP" id="MF_00093">
    <property type="entry name" value="Rel_fac_1"/>
    <property type="match status" value="1"/>
</dbReference>
<dbReference type="InterPro" id="IPR005139">
    <property type="entry name" value="PCRF"/>
</dbReference>
<dbReference type="InterPro" id="IPR000352">
    <property type="entry name" value="Pep_chain_release_fac_I"/>
</dbReference>
<dbReference type="InterPro" id="IPR045853">
    <property type="entry name" value="Pep_chain_release_fac_I_sf"/>
</dbReference>
<dbReference type="InterPro" id="IPR050057">
    <property type="entry name" value="Prokaryotic/Mito_RF"/>
</dbReference>
<dbReference type="InterPro" id="IPR004373">
    <property type="entry name" value="RF-1"/>
</dbReference>
<dbReference type="NCBIfam" id="TIGR00019">
    <property type="entry name" value="prfA"/>
    <property type="match status" value="1"/>
</dbReference>
<dbReference type="NCBIfam" id="NF001859">
    <property type="entry name" value="PRK00591.1"/>
    <property type="match status" value="1"/>
</dbReference>
<dbReference type="PANTHER" id="PTHR43804">
    <property type="entry name" value="LD18447P"/>
    <property type="match status" value="1"/>
</dbReference>
<dbReference type="PANTHER" id="PTHR43804:SF7">
    <property type="entry name" value="LD18447P"/>
    <property type="match status" value="1"/>
</dbReference>
<dbReference type="Pfam" id="PF03462">
    <property type="entry name" value="PCRF"/>
    <property type="match status" value="1"/>
</dbReference>
<dbReference type="Pfam" id="PF00472">
    <property type="entry name" value="RF-1"/>
    <property type="match status" value="1"/>
</dbReference>
<dbReference type="SMART" id="SM00937">
    <property type="entry name" value="PCRF"/>
    <property type="match status" value="1"/>
</dbReference>
<dbReference type="SUPFAM" id="SSF75620">
    <property type="entry name" value="Release factor"/>
    <property type="match status" value="1"/>
</dbReference>
<dbReference type="PROSITE" id="PS00745">
    <property type="entry name" value="RF_PROK_I"/>
    <property type="match status" value="1"/>
</dbReference>
<proteinExistence type="inferred from homology"/>
<feature type="chain" id="PRO_1000057612" description="Peptide chain release factor 1">
    <location>
        <begin position="1"/>
        <end position="357"/>
    </location>
</feature>
<feature type="modified residue" description="N5-methylglutamine" evidence="1">
    <location>
        <position position="234"/>
    </location>
</feature>
<reference key="1">
    <citation type="submission" date="2007-10" db="EMBL/GenBank/DDBJ databases">
        <title>Complete genome of Alkaliphilus oremlandii OhILAs.</title>
        <authorList>
            <person name="Copeland A."/>
            <person name="Lucas S."/>
            <person name="Lapidus A."/>
            <person name="Barry K."/>
            <person name="Detter J.C."/>
            <person name="Glavina del Rio T."/>
            <person name="Hammon N."/>
            <person name="Israni S."/>
            <person name="Dalin E."/>
            <person name="Tice H."/>
            <person name="Pitluck S."/>
            <person name="Chain P."/>
            <person name="Malfatti S."/>
            <person name="Shin M."/>
            <person name="Vergez L."/>
            <person name="Schmutz J."/>
            <person name="Larimer F."/>
            <person name="Land M."/>
            <person name="Hauser L."/>
            <person name="Kyrpides N."/>
            <person name="Mikhailova N."/>
            <person name="Stolz J.F."/>
            <person name="Dawson A."/>
            <person name="Fisher E."/>
            <person name="Crable B."/>
            <person name="Perera E."/>
            <person name="Lisak J."/>
            <person name="Ranganathan M."/>
            <person name="Basu P."/>
            <person name="Richardson P."/>
        </authorList>
    </citation>
    <scope>NUCLEOTIDE SEQUENCE [LARGE SCALE GENOMIC DNA]</scope>
    <source>
        <strain>OhILAs</strain>
    </source>
</reference>
<organism>
    <name type="scientific">Alkaliphilus oremlandii (strain OhILAs)</name>
    <name type="common">Clostridium oremlandii (strain OhILAs)</name>
    <dbReference type="NCBI Taxonomy" id="350688"/>
    <lineage>
        <taxon>Bacteria</taxon>
        <taxon>Bacillati</taxon>
        <taxon>Bacillota</taxon>
        <taxon>Clostridia</taxon>
        <taxon>Peptostreptococcales</taxon>
        <taxon>Natronincolaceae</taxon>
        <taxon>Alkaliphilus</taxon>
    </lineage>
</organism>